<proteinExistence type="inferred from homology"/>
<organism>
    <name type="scientific">Rhizobium rhizogenes (strain K84 / ATCC BAA-868)</name>
    <name type="common">Agrobacterium radiobacter</name>
    <dbReference type="NCBI Taxonomy" id="311403"/>
    <lineage>
        <taxon>Bacteria</taxon>
        <taxon>Pseudomonadati</taxon>
        <taxon>Pseudomonadota</taxon>
        <taxon>Alphaproteobacteria</taxon>
        <taxon>Hyphomicrobiales</taxon>
        <taxon>Rhizobiaceae</taxon>
        <taxon>Rhizobium/Agrobacterium group</taxon>
        <taxon>Rhizobium</taxon>
    </lineage>
</organism>
<keyword id="KW-0687">Ribonucleoprotein</keyword>
<keyword id="KW-0689">Ribosomal protein</keyword>
<keyword id="KW-0694">RNA-binding</keyword>
<keyword id="KW-0699">rRNA-binding</keyword>
<reference key="1">
    <citation type="journal article" date="2009" name="J. Bacteriol.">
        <title>Genome sequences of three Agrobacterium biovars help elucidate the evolution of multichromosome genomes in bacteria.</title>
        <authorList>
            <person name="Slater S.C."/>
            <person name="Goldman B.S."/>
            <person name="Goodner B."/>
            <person name="Setubal J.C."/>
            <person name="Farrand S.K."/>
            <person name="Nester E.W."/>
            <person name="Burr T.J."/>
            <person name="Banta L."/>
            <person name="Dickerman A.W."/>
            <person name="Paulsen I."/>
            <person name="Otten L."/>
            <person name="Suen G."/>
            <person name="Welch R."/>
            <person name="Almeida N.F."/>
            <person name="Arnold F."/>
            <person name="Burton O.T."/>
            <person name="Du Z."/>
            <person name="Ewing A."/>
            <person name="Godsy E."/>
            <person name="Heisel S."/>
            <person name="Houmiel K.L."/>
            <person name="Jhaveri J."/>
            <person name="Lu J."/>
            <person name="Miller N.M."/>
            <person name="Norton S."/>
            <person name="Chen Q."/>
            <person name="Phoolcharoen W."/>
            <person name="Ohlin V."/>
            <person name="Ondrusek D."/>
            <person name="Pride N."/>
            <person name="Stricklin S.L."/>
            <person name="Sun J."/>
            <person name="Wheeler C."/>
            <person name="Wilson L."/>
            <person name="Zhu H."/>
            <person name="Wood D.W."/>
        </authorList>
    </citation>
    <scope>NUCLEOTIDE SEQUENCE [LARGE SCALE GENOMIC DNA]</scope>
    <source>
        <strain>K84 / ATCC BAA-868</strain>
    </source>
</reference>
<feature type="chain" id="PRO_1000166393" description="Small ribosomal subunit protein uS15">
    <location>
        <begin position="1"/>
        <end position="89"/>
    </location>
</feature>
<accession>B9JGT0</accession>
<comment type="function">
    <text evidence="1">One of the primary rRNA binding proteins, it binds directly to 16S rRNA where it helps nucleate assembly of the platform of the 30S subunit by binding and bridging several RNA helices of the 16S rRNA.</text>
</comment>
<comment type="function">
    <text evidence="1">Forms an intersubunit bridge (bridge B4) with the 23S rRNA of the 50S subunit in the ribosome.</text>
</comment>
<comment type="subunit">
    <text evidence="1">Part of the 30S ribosomal subunit. Forms a bridge to the 50S subunit in the 70S ribosome, contacting the 23S rRNA.</text>
</comment>
<comment type="similarity">
    <text evidence="1">Belongs to the universal ribosomal protein uS15 family.</text>
</comment>
<name>RS15_RHIR8</name>
<protein>
    <recommendedName>
        <fullName evidence="1">Small ribosomal subunit protein uS15</fullName>
    </recommendedName>
    <alternativeName>
        <fullName evidence="2">30S ribosomal protein S15</fullName>
    </alternativeName>
</protein>
<dbReference type="EMBL" id="CP000628">
    <property type="protein sequence ID" value="ACM24926.1"/>
    <property type="molecule type" value="Genomic_DNA"/>
</dbReference>
<dbReference type="RefSeq" id="WP_007690305.1">
    <property type="nucleotide sequence ID" value="NC_011985.1"/>
</dbReference>
<dbReference type="SMR" id="B9JGT0"/>
<dbReference type="STRING" id="311403.Arad_0169"/>
<dbReference type="GeneID" id="86850559"/>
<dbReference type="KEGG" id="ara:Arad_0169"/>
<dbReference type="eggNOG" id="COG0184">
    <property type="taxonomic scope" value="Bacteria"/>
</dbReference>
<dbReference type="HOGENOM" id="CLU_148518_0_0_5"/>
<dbReference type="Proteomes" id="UP000001600">
    <property type="component" value="Chromosome 1"/>
</dbReference>
<dbReference type="GO" id="GO:0022627">
    <property type="term" value="C:cytosolic small ribosomal subunit"/>
    <property type="evidence" value="ECO:0007669"/>
    <property type="project" value="TreeGrafter"/>
</dbReference>
<dbReference type="GO" id="GO:0019843">
    <property type="term" value="F:rRNA binding"/>
    <property type="evidence" value="ECO:0007669"/>
    <property type="project" value="UniProtKB-UniRule"/>
</dbReference>
<dbReference type="GO" id="GO:0003735">
    <property type="term" value="F:structural constituent of ribosome"/>
    <property type="evidence" value="ECO:0007669"/>
    <property type="project" value="InterPro"/>
</dbReference>
<dbReference type="GO" id="GO:0006412">
    <property type="term" value="P:translation"/>
    <property type="evidence" value="ECO:0007669"/>
    <property type="project" value="UniProtKB-UniRule"/>
</dbReference>
<dbReference type="CDD" id="cd00353">
    <property type="entry name" value="Ribosomal_S15p_S13e"/>
    <property type="match status" value="1"/>
</dbReference>
<dbReference type="FunFam" id="1.10.287.10:FF:000002">
    <property type="entry name" value="30S ribosomal protein S15"/>
    <property type="match status" value="1"/>
</dbReference>
<dbReference type="Gene3D" id="6.10.250.3130">
    <property type="match status" value="1"/>
</dbReference>
<dbReference type="Gene3D" id="1.10.287.10">
    <property type="entry name" value="S15/NS1, RNA-binding"/>
    <property type="match status" value="1"/>
</dbReference>
<dbReference type="HAMAP" id="MF_01343_B">
    <property type="entry name" value="Ribosomal_uS15_B"/>
    <property type="match status" value="1"/>
</dbReference>
<dbReference type="InterPro" id="IPR000589">
    <property type="entry name" value="Ribosomal_uS15"/>
</dbReference>
<dbReference type="InterPro" id="IPR005290">
    <property type="entry name" value="Ribosomal_uS15_bac-type"/>
</dbReference>
<dbReference type="InterPro" id="IPR009068">
    <property type="entry name" value="uS15_NS1_RNA-bd_sf"/>
</dbReference>
<dbReference type="NCBIfam" id="TIGR00952">
    <property type="entry name" value="S15_bact"/>
    <property type="match status" value="1"/>
</dbReference>
<dbReference type="PANTHER" id="PTHR23321">
    <property type="entry name" value="RIBOSOMAL PROTEIN S15, BACTERIAL AND ORGANELLAR"/>
    <property type="match status" value="1"/>
</dbReference>
<dbReference type="PANTHER" id="PTHR23321:SF26">
    <property type="entry name" value="SMALL RIBOSOMAL SUBUNIT PROTEIN US15M"/>
    <property type="match status" value="1"/>
</dbReference>
<dbReference type="Pfam" id="PF00312">
    <property type="entry name" value="Ribosomal_S15"/>
    <property type="match status" value="1"/>
</dbReference>
<dbReference type="SMART" id="SM01387">
    <property type="entry name" value="Ribosomal_S15"/>
    <property type="match status" value="1"/>
</dbReference>
<dbReference type="SUPFAM" id="SSF47060">
    <property type="entry name" value="S15/NS1 RNA-binding domain"/>
    <property type="match status" value="1"/>
</dbReference>
<dbReference type="PROSITE" id="PS00362">
    <property type="entry name" value="RIBOSOMAL_S15"/>
    <property type="match status" value="1"/>
</dbReference>
<sequence>MSITAERKAALIKEYATVEGDTGSPEVQVAILTERINNLTDHFKDHKKDNHSRRGLLTMVSSRRSLLDYLKKKDEGRYSKLIGSLGIRR</sequence>
<gene>
    <name evidence="1" type="primary">rpsO</name>
    <name type="ordered locus">Arad_0169</name>
</gene>
<evidence type="ECO:0000255" key="1">
    <source>
        <dbReference type="HAMAP-Rule" id="MF_01343"/>
    </source>
</evidence>
<evidence type="ECO:0000305" key="2"/>